<evidence type="ECO:0000255" key="1">
    <source>
        <dbReference type="HAMAP-Rule" id="MF_00502"/>
    </source>
</evidence>
<evidence type="ECO:0000305" key="2"/>
<dbReference type="EMBL" id="CP001100">
    <property type="protein sequence ID" value="ACF14002.1"/>
    <property type="molecule type" value="Genomic_DNA"/>
</dbReference>
<dbReference type="RefSeq" id="WP_012500086.1">
    <property type="nucleotide sequence ID" value="NC_011026.1"/>
</dbReference>
<dbReference type="SMR" id="B3QS57"/>
<dbReference type="STRING" id="517418.Ctha_1543"/>
<dbReference type="KEGG" id="cts:Ctha_1543"/>
<dbReference type="eggNOG" id="COG0254">
    <property type="taxonomic scope" value="Bacteria"/>
</dbReference>
<dbReference type="HOGENOM" id="CLU_114306_2_2_10"/>
<dbReference type="OrthoDB" id="9803251at2"/>
<dbReference type="Proteomes" id="UP000001208">
    <property type="component" value="Chromosome"/>
</dbReference>
<dbReference type="GO" id="GO:1990904">
    <property type="term" value="C:ribonucleoprotein complex"/>
    <property type="evidence" value="ECO:0007669"/>
    <property type="project" value="UniProtKB-KW"/>
</dbReference>
<dbReference type="GO" id="GO:0005840">
    <property type="term" value="C:ribosome"/>
    <property type="evidence" value="ECO:0007669"/>
    <property type="project" value="UniProtKB-KW"/>
</dbReference>
<dbReference type="GO" id="GO:0003735">
    <property type="term" value="F:structural constituent of ribosome"/>
    <property type="evidence" value="ECO:0007669"/>
    <property type="project" value="InterPro"/>
</dbReference>
<dbReference type="GO" id="GO:0006412">
    <property type="term" value="P:translation"/>
    <property type="evidence" value="ECO:0007669"/>
    <property type="project" value="UniProtKB-UniRule"/>
</dbReference>
<dbReference type="Gene3D" id="4.10.830.30">
    <property type="entry name" value="Ribosomal protein L31"/>
    <property type="match status" value="1"/>
</dbReference>
<dbReference type="HAMAP" id="MF_00502">
    <property type="entry name" value="Ribosomal_bL31_2"/>
    <property type="match status" value="1"/>
</dbReference>
<dbReference type="InterPro" id="IPR034704">
    <property type="entry name" value="Ribosomal_bL28/bL31-like_sf"/>
</dbReference>
<dbReference type="InterPro" id="IPR002150">
    <property type="entry name" value="Ribosomal_bL31"/>
</dbReference>
<dbReference type="InterPro" id="IPR027493">
    <property type="entry name" value="Ribosomal_bL31_B"/>
</dbReference>
<dbReference type="InterPro" id="IPR042105">
    <property type="entry name" value="Ribosomal_bL31_sf"/>
</dbReference>
<dbReference type="NCBIfam" id="TIGR00105">
    <property type="entry name" value="L31"/>
    <property type="match status" value="1"/>
</dbReference>
<dbReference type="NCBIfam" id="NF002462">
    <property type="entry name" value="PRK01678.1"/>
    <property type="match status" value="1"/>
</dbReference>
<dbReference type="PANTHER" id="PTHR33280">
    <property type="entry name" value="50S RIBOSOMAL PROTEIN L31, CHLOROPLASTIC"/>
    <property type="match status" value="1"/>
</dbReference>
<dbReference type="PANTHER" id="PTHR33280:SF1">
    <property type="entry name" value="LARGE RIBOSOMAL SUBUNIT PROTEIN BL31C"/>
    <property type="match status" value="1"/>
</dbReference>
<dbReference type="Pfam" id="PF01197">
    <property type="entry name" value="Ribosomal_L31"/>
    <property type="match status" value="1"/>
</dbReference>
<dbReference type="PRINTS" id="PR01249">
    <property type="entry name" value="RIBOSOMALL31"/>
</dbReference>
<dbReference type="SUPFAM" id="SSF143800">
    <property type="entry name" value="L28p-like"/>
    <property type="match status" value="1"/>
</dbReference>
<dbReference type="PROSITE" id="PS01143">
    <property type="entry name" value="RIBOSOMAL_L31"/>
    <property type="match status" value="1"/>
</dbReference>
<proteinExistence type="inferred from homology"/>
<reference key="1">
    <citation type="submission" date="2008-06" db="EMBL/GenBank/DDBJ databases">
        <title>Complete sequence of Chloroherpeton thalassium ATCC 35110.</title>
        <authorList>
            <consortium name="US DOE Joint Genome Institute"/>
            <person name="Lucas S."/>
            <person name="Copeland A."/>
            <person name="Lapidus A."/>
            <person name="Glavina del Rio T."/>
            <person name="Dalin E."/>
            <person name="Tice H."/>
            <person name="Bruce D."/>
            <person name="Goodwin L."/>
            <person name="Pitluck S."/>
            <person name="Schmutz J."/>
            <person name="Larimer F."/>
            <person name="Land M."/>
            <person name="Hauser L."/>
            <person name="Kyrpides N."/>
            <person name="Mikhailova N."/>
            <person name="Liu Z."/>
            <person name="Li T."/>
            <person name="Zhao F."/>
            <person name="Overmann J."/>
            <person name="Bryant D.A."/>
            <person name="Richardson P."/>
        </authorList>
    </citation>
    <scope>NUCLEOTIDE SEQUENCE [LARGE SCALE GENOMIC DNA]</scope>
    <source>
        <strain>ATCC 35110 / GB-78</strain>
    </source>
</reference>
<name>RL31B_CHLT3</name>
<organism>
    <name type="scientific">Chloroherpeton thalassium (strain ATCC 35110 / GB-78)</name>
    <dbReference type="NCBI Taxonomy" id="517418"/>
    <lineage>
        <taxon>Bacteria</taxon>
        <taxon>Pseudomonadati</taxon>
        <taxon>Chlorobiota</taxon>
        <taxon>Chlorobiia</taxon>
        <taxon>Chlorobiales</taxon>
        <taxon>Chloroherpetonaceae</taxon>
        <taxon>Chloroherpeton</taxon>
    </lineage>
</organism>
<protein>
    <recommendedName>
        <fullName evidence="1">Large ribosomal subunit protein bL31B</fullName>
    </recommendedName>
    <alternativeName>
        <fullName evidence="2">50S ribosomal protein L31 type B</fullName>
    </alternativeName>
</protein>
<comment type="subunit">
    <text evidence="1">Part of the 50S ribosomal subunit.</text>
</comment>
<comment type="similarity">
    <text evidence="1">Belongs to the bacterial ribosomal protein bL31 family. Type B subfamily.</text>
</comment>
<sequence>MKEGIHPKNYRPVVFQDLSNGDKFIVRSCIVTSETIKMEDGHEYPLSKVEITNASHPFFTGQQMLLDTAGRVERFNKRFGKMGKKS</sequence>
<feature type="chain" id="PRO_1000126795" description="Large ribosomal subunit protein bL31B">
    <location>
        <begin position="1"/>
        <end position="86"/>
    </location>
</feature>
<keyword id="KW-1185">Reference proteome</keyword>
<keyword id="KW-0687">Ribonucleoprotein</keyword>
<keyword id="KW-0689">Ribosomal protein</keyword>
<accession>B3QS57</accession>
<gene>
    <name evidence="1" type="primary">rpmE2</name>
    <name type="ordered locus">Ctha_1543</name>
</gene>